<name>MODC_HAEIN</name>
<proteinExistence type="inferred from homology"/>
<organism>
    <name type="scientific">Haemophilus influenzae (strain ATCC 51907 / DSM 11121 / KW20 / Rd)</name>
    <dbReference type="NCBI Taxonomy" id="71421"/>
    <lineage>
        <taxon>Bacteria</taxon>
        <taxon>Pseudomonadati</taxon>
        <taxon>Pseudomonadota</taxon>
        <taxon>Gammaproteobacteria</taxon>
        <taxon>Pasteurellales</taxon>
        <taxon>Pasteurellaceae</taxon>
        <taxon>Haemophilus</taxon>
    </lineage>
</organism>
<sequence length="351" mass="39582">MLQINVKKQLGQLALQANIQVPDQGVTAIFGLSGSGKTSLINLVSGLIQPDEGFICLNDRTLVDMESQESLPTHLRKIGYVFQDARLFPHYTVKGNLRYGMKNVSQDDFNYIVDLLGITHLLKRYPLTLSGGEKQRVAIGRALLTDPDILLMDEPLSALDVPRKRELMQYLERLSKEINIPILYVTHSLDELLRLADRVVLMENGIVKAYDRVEKIWNSPIFAPWKGESEQSSVLALPVHLHNPPYKMTALSLGEQVLWIHQVPANVGERVRVCIYSSDVSITLQKPEQTSIRNILRGKITQIEIQDSRVDLAVLVEGHKIWASISKWAQNELRFAIGQDVYVQIKAVSVM</sequence>
<reference key="1">
    <citation type="journal article" date="1995" name="Science">
        <title>Whole-genome random sequencing and assembly of Haemophilus influenzae Rd.</title>
        <authorList>
            <person name="Fleischmann R.D."/>
            <person name="Adams M.D."/>
            <person name="White O."/>
            <person name="Clayton R.A."/>
            <person name="Kirkness E.F."/>
            <person name="Kerlavage A.R."/>
            <person name="Bult C.J."/>
            <person name="Tomb J.-F."/>
            <person name="Dougherty B.A."/>
            <person name="Merrick J.M."/>
            <person name="McKenney K."/>
            <person name="Sutton G.G."/>
            <person name="FitzHugh W."/>
            <person name="Fields C.A."/>
            <person name="Gocayne J.D."/>
            <person name="Scott J.D."/>
            <person name="Shirley R."/>
            <person name="Liu L.-I."/>
            <person name="Glodek A."/>
            <person name="Kelley J.M."/>
            <person name="Weidman J.F."/>
            <person name="Phillips C.A."/>
            <person name="Spriggs T."/>
            <person name="Hedblom E."/>
            <person name="Cotton M.D."/>
            <person name="Utterback T.R."/>
            <person name="Hanna M.C."/>
            <person name="Nguyen D.T."/>
            <person name="Saudek D.M."/>
            <person name="Brandon R.C."/>
            <person name="Fine L.D."/>
            <person name="Fritchman J.L."/>
            <person name="Fuhrmann J.L."/>
            <person name="Geoghagen N.S.M."/>
            <person name="Gnehm C.L."/>
            <person name="McDonald L.A."/>
            <person name="Small K.V."/>
            <person name="Fraser C.M."/>
            <person name="Smith H.O."/>
            <person name="Venter J.C."/>
        </authorList>
    </citation>
    <scope>NUCLEOTIDE SEQUENCE [LARGE SCALE GENOMIC DNA]</scope>
    <source>
        <strain>ATCC 51907 / DSM 11121 / KW20 / Rd</strain>
    </source>
</reference>
<accession>P45321</accession>
<evidence type="ECO:0000255" key="1">
    <source>
        <dbReference type="HAMAP-Rule" id="MF_01705"/>
    </source>
</evidence>
<evidence type="ECO:0000255" key="2">
    <source>
        <dbReference type="PROSITE-ProRule" id="PRU01213"/>
    </source>
</evidence>
<feature type="chain" id="PRO_0000092542" description="Molybdenum import ATP-binding protein ModC">
    <location>
        <begin position="1"/>
        <end position="351"/>
    </location>
</feature>
<feature type="domain" description="ABC transporter" evidence="1">
    <location>
        <begin position="1"/>
        <end position="229"/>
    </location>
</feature>
<feature type="domain" description="Mop" evidence="2">
    <location>
        <begin position="289"/>
        <end position="351"/>
    </location>
</feature>
<feature type="binding site" evidence="1">
    <location>
        <begin position="31"/>
        <end position="38"/>
    </location>
    <ligand>
        <name>ATP</name>
        <dbReference type="ChEBI" id="CHEBI:30616"/>
    </ligand>
</feature>
<keyword id="KW-0067">ATP-binding</keyword>
<keyword id="KW-0997">Cell inner membrane</keyword>
<keyword id="KW-1003">Cell membrane</keyword>
<keyword id="KW-0472">Membrane</keyword>
<keyword id="KW-0500">Molybdenum</keyword>
<keyword id="KW-0547">Nucleotide-binding</keyword>
<keyword id="KW-1185">Reference proteome</keyword>
<keyword id="KW-1278">Translocase</keyword>
<keyword id="KW-0813">Transport</keyword>
<protein>
    <recommendedName>
        <fullName evidence="1">Molybdenum import ATP-binding protein ModC</fullName>
        <ecNumber evidence="1">7.3.2.5</ecNumber>
    </recommendedName>
</protein>
<gene>
    <name evidence="1" type="primary">modC</name>
    <name type="ordered locus">HI_1691</name>
</gene>
<dbReference type="EC" id="7.3.2.5" evidence="1"/>
<dbReference type="EMBL" id="L42023">
    <property type="protein sequence ID" value="AAC23337.1"/>
    <property type="molecule type" value="Genomic_DNA"/>
</dbReference>
<dbReference type="PIR" id="I64136">
    <property type="entry name" value="I64136"/>
</dbReference>
<dbReference type="RefSeq" id="NP_439833.1">
    <property type="nucleotide sequence ID" value="NC_000907.1"/>
</dbReference>
<dbReference type="SMR" id="P45321"/>
<dbReference type="STRING" id="71421.HI_1691"/>
<dbReference type="EnsemblBacteria" id="AAC23337">
    <property type="protein sequence ID" value="AAC23337"/>
    <property type="gene ID" value="HI_1691"/>
</dbReference>
<dbReference type="KEGG" id="hin:HI_1691"/>
<dbReference type="PATRIC" id="fig|71421.8.peg.1770"/>
<dbReference type="eggNOG" id="COG4148">
    <property type="taxonomic scope" value="Bacteria"/>
</dbReference>
<dbReference type="HOGENOM" id="CLU_000604_1_1_6"/>
<dbReference type="OrthoDB" id="9802264at2"/>
<dbReference type="PhylomeDB" id="P45321"/>
<dbReference type="BioCyc" id="HINF71421:G1GJ1-1707-MONOMER"/>
<dbReference type="Proteomes" id="UP000000579">
    <property type="component" value="Chromosome"/>
</dbReference>
<dbReference type="GO" id="GO:0005886">
    <property type="term" value="C:plasma membrane"/>
    <property type="evidence" value="ECO:0007669"/>
    <property type="project" value="UniProtKB-SubCell"/>
</dbReference>
<dbReference type="GO" id="GO:0015412">
    <property type="term" value="F:ABC-type molybdate transporter activity"/>
    <property type="evidence" value="ECO:0007669"/>
    <property type="project" value="UniProtKB-EC"/>
</dbReference>
<dbReference type="GO" id="GO:0005524">
    <property type="term" value="F:ATP binding"/>
    <property type="evidence" value="ECO:0007669"/>
    <property type="project" value="UniProtKB-KW"/>
</dbReference>
<dbReference type="GO" id="GO:0016887">
    <property type="term" value="F:ATP hydrolysis activity"/>
    <property type="evidence" value="ECO:0007669"/>
    <property type="project" value="InterPro"/>
</dbReference>
<dbReference type="FunFam" id="3.40.50.300:FF:000634">
    <property type="entry name" value="Molybdenum import ATP-binding protein ModC"/>
    <property type="match status" value="1"/>
</dbReference>
<dbReference type="Gene3D" id="2.40.50.100">
    <property type="match status" value="1"/>
</dbReference>
<dbReference type="Gene3D" id="3.40.50.300">
    <property type="entry name" value="P-loop containing nucleotide triphosphate hydrolases"/>
    <property type="match status" value="1"/>
</dbReference>
<dbReference type="InterPro" id="IPR003593">
    <property type="entry name" value="AAA+_ATPase"/>
</dbReference>
<dbReference type="InterPro" id="IPR003439">
    <property type="entry name" value="ABC_transporter-like_ATP-bd"/>
</dbReference>
<dbReference type="InterPro" id="IPR017871">
    <property type="entry name" value="ABC_transporter-like_CS"/>
</dbReference>
<dbReference type="InterPro" id="IPR008995">
    <property type="entry name" value="Mo/tungstate-bd_C_term_dom"/>
</dbReference>
<dbReference type="InterPro" id="IPR011868">
    <property type="entry name" value="ModC_ABC_ATP-bd"/>
</dbReference>
<dbReference type="InterPro" id="IPR050334">
    <property type="entry name" value="Molybdenum_import_ModC"/>
</dbReference>
<dbReference type="InterPro" id="IPR004606">
    <property type="entry name" value="Mop_domain"/>
</dbReference>
<dbReference type="InterPro" id="IPR027417">
    <property type="entry name" value="P-loop_NTPase"/>
</dbReference>
<dbReference type="InterPro" id="IPR005116">
    <property type="entry name" value="Transp-assoc_OB_typ1"/>
</dbReference>
<dbReference type="NCBIfam" id="TIGR02142">
    <property type="entry name" value="modC_ABC"/>
    <property type="match status" value="1"/>
</dbReference>
<dbReference type="NCBIfam" id="TIGR00638">
    <property type="entry name" value="Mop"/>
    <property type="match status" value="1"/>
</dbReference>
<dbReference type="NCBIfam" id="NF008355">
    <property type="entry name" value="PRK11144.1"/>
    <property type="match status" value="1"/>
</dbReference>
<dbReference type="PANTHER" id="PTHR43514">
    <property type="entry name" value="ABC TRANSPORTER I FAMILY MEMBER 10"/>
    <property type="match status" value="1"/>
</dbReference>
<dbReference type="PANTHER" id="PTHR43514:SF4">
    <property type="entry name" value="ABC TRANSPORTER I FAMILY MEMBER 10"/>
    <property type="match status" value="1"/>
</dbReference>
<dbReference type="Pfam" id="PF00005">
    <property type="entry name" value="ABC_tran"/>
    <property type="match status" value="1"/>
</dbReference>
<dbReference type="Pfam" id="PF03459">
    <property type="entry name" value="TOBE"/>
    <property type="match status" value="1"/>
</dbReference>
<dbReference type="SMART" id="SM00382">
    <property type="entry name" value="AAA"/>
    <property type="match status" value="1"/>
</dbReference>
<dbReference type="SUPFAM" id="SSF50331">
    <property type="entry name" value="MOP-like"/>
    <property type="match status" value="1"/>
</dbReference>
<dbReference type="SUPFAM" id="SSF52540">
    <property type="entry name" value="P-loop containing nucleoside triphosphate hydrolases"/>
    <property type="match status" value="1"/>
</dbReference>
<dbReference type="PROSITE" id="PS00211">
    <property type="entry name" value="ABC_TRANSPORTER_1"/>
    <property type="match status" value="1"/>
</dbReference>
<dbReference type="PROSITE" id="PS50893">
    <property type="entry name" value="ABC_TRANSPORTER_2"/>
    <property type="match status" value="1"/>
</dbReference>
<dbReference type="PROSITE" id="PS51241">
    <property type="entry name" value="MODC"/>
    <property type="match status" value="1"/>
</dbReference>
<dbReference type="PROSITE" id="PS51866">
    <property type="entry name" value="MOP"/>
    <property type="match status" value="1"/>
</dbReference>
<comment type="function">
    <text evidence="1">Part of the ABC transporter complex ModABC involved in molybdenum import. Responsible for energy coupling to the transport system.</text>
</comment>
<comment type="catalytic activity">
    <reaction evidence="1">
        <text>molybdate(out) + ATP + H2O = molybdate(in) + ADP + phosphate + H(+)</text>
        <dbReference type="Rhea" id="RHEA:22020"/>
        <dbReference type="ChEBI" id="CHEBI:15377"/>
        <dbReference type="ChEBI" id="CHEBI:15378"/>
        <dbReference type="ChEBI" id="CHEBI:30616"/>
        <dbReference type="ChEBI" id="CHEBI:36264"/>
        <dbReference type="ChEBI" id="CHEBI:43474"/>
        <dbReference type="ChEBI" id="CHEBI:456216"/>
        <dbReference type="EC" id="7.3.2.5"/>
    </reaction>
</comment>
<comment type="subunit">
    <text evidence="1">The complex is composed of two ATP-binding proteins (ModC), two transmembrane proteins (ModB) and a solute-binding protein (ModA).</text>
</comment>
<comment type="subcellular location">
    <subcellularLocation>
        <location evidence="1">Cell inner membrane</location>
        <topology evidence="1">Peripheral membrane protein</topology>
    </subcellularLocation>
</comment>
<comment type="similarity">
    <text evidence="1">Belongs to the ABC transporter superfamily. Molybdate importer (TC 3.A.1.8) family.</text>
</comment>